<protein>
    <recommendedName>
        <fullName evidence="1">Aspartyl/glutamyl-tRNA(Asn/Gln) amidotransferase subunit B</fullName>
        <shortName evidence="1">Asp/Glu-ADT subunit B</shortName>
        <ecNumber evidence="1">6.3.5.-</ecNumber>
    </recommendedName>
</protein>
<dbReference type="EC" id="6.3.5.-" evidence="1"/>
<dbReference type="EMBL" id="CP001230">
    <property type="protein sequence ID" value="ACO03728.1"/>
    <property type="molecule type" value="Genomic_DNA"/>
</dbReference>
<dbReference type="RefSeq" id="WP_012675967.1">
    <property type="nucleotide sequence ID" value="NC_012440.1"/>
</dbReference>
<dbReference type="SMR" id="C0QUH9"/>
<dbReference type="STRING" id="123214.PERMA_0555"/>
<dbReference type="PaxDb" id="123214-PERMA_0555"/>
<dbReference type="KEGG" id="pmx:PERMA_0555"/>
<dbReference type="eggNOG" id="COG0064">
    <property type="taxonomic scope" value="Bacteria"/>
</dbReference>
<dbReference type="HOGENOM" id="CLU_019240_0_0_0"/>
<dbReference type="OrthoDB" id="9804078at2"/>
<dbReference type="Proteomes" id="UP000001366">
    <property type="component" value="Chromosome"/>
</dbReference>
<dbReference type="GO" id="GO:0050566">
    <property type="term" value="F:asparaginyl-tRNA synthase (glutamine-hydrolyzing) activity"/>
    <property type="evidence" value="ECO:0007669"/>
    <property type="project" value="RHEA"/>
</dbReference>
<dbReference type="GO" id="GO:0005524">
    <property type="term" value="F:ATP binding"/>
    <property type="evidence" value="ECO:0007669"/>
    <property type="project" value="UniProtKB-KW"/>
</dbReference>
<dbReference type="GO" id="GO:0050567">
    <property type="term" value="F:glutaminyl-tRNA synthase (glutamine-hydrolyzing) activity"/>
    <property type="evidence" value="ECO:0007669"/>
    <property type="project" value="UniProtKB-UniRule"/>
</dbReference>
<dbReference type="GO" id="GO:0070681">
    <property type="term" value="P:glutaminyl-tRNAGln biosynthesis via transamidation"/>
    <property type="evidence" value="ECO:0007669"/>
    <property type="project" value="TreeGrafter"/>
</dbReference>
<dbReference type="GO" id="GO:0006412">
    <property type="term" value="P:translation"/>
    <property type="evidence" value="ECO:0007669"/>
    <property type="project" value="UniProtKB-UniRule"/>
</dbReference>
<dbReference type="FunFam" id="1.10.10.410:FF:000001">
    <property type="entry name" value="Aspartyl/glutamyl-tRNA(Asn/Gln) amidotransferase subunit B"/>
    <property type="match status" value="1"/>
</dbReference>
<dbReference type="FunFam" id="1.10.150.380:FF:000001">
    <property type="entry name" value="Aspartyl/glutamyl-tRNA(Asn/Gln) amidotransferase subunit B"/>
    <property type="match status" value="1"/>
</dbReference>
<dbReference type="Gene3D" id="1.10.10.410">
    <property type="match status" value="1"/>
</dbReference>
<dbReference type="Gene3D" id="1.10.150.380">
    <property type="entry name" value="GatB domain, N-terminal subdomain"/>
    <property type="match status" value="1"/>
</dbReference>
<dbReference type="HAMAP" id="MF_00121">
    <property type="entry name" value="GatB"/>
    <property type="match status" value="1"/>
</dbReference>
<dbReference type="InterPro" id="IPR017959">
    <property type="entry name" value="Asn/Gln-tRNA_amidoTrfase_suB/E"/>
</dbReference>
<dbReference type="InterPro" id="IPR006075">
    <property type="entry name" value="Asn/Gln-tRNA_Trfase_suB/E_cat"/>
</dbReference>
<dbReference type="InterPro" id="IPR018027">
    <property type="entry name" value="Asn/Gln_amidotransferase"/>
</dbReference>
<dbReference type="InterPro" id="IPR003789">
    <property type="entry name" value="Asn/Gln_tRNA_amidoTrase-B-like"/>
</dbReference>
<dbReference type="InterPro" id="IPR004413">
    <property type="entry name" value="GatB"/>
</dbReference>
<dbReference type="InterPro" id="IPR042114">
    <property type="entry name" value="GatB_C_1"/>
</dbReference>
<dbReference type="InterPro" id="IPR023168">
    <property type="entry name" value="GatB_Yqey_C_2"/>
</dbReference>
<dbReference type="InterPro" id="IPR017958">
    <property type="entry name" value="Gln-tRNA_amidoTrfase_suB_CS"/>
</dbReference>
<dbReference type="InterPro" id="IPR014746">
    <property type="entry name" value="Gln_synth/guanido_kin_cat_dom"/>
</dbReference>
<dbReference type="NCBIfam" id="TIGR00133">
    <property type="entry name" value="gatB"/>
    <property type="match status" value="1"/>
</dbReference>
<dbReference type="NCBIfam" id="NF004012">
    <property type="entry name" value="PRK05477.1-2"/>
    <property type="match status" value="1"/>
</dbReference>
<dbReference type="NCBIfam" id="NF004014">
    <property type="entry name" value="PRK05477.1-4"/>
    <property type="match status" value="1"/>
</dbReference>
<dbReference type="NCBIfam" id="NF004015">
    <property type="entry name" value="PRK05477.1-5"/>
    <property type="match status" value="1"/>
</dbReference>
<dbReference type="PANTHER" id="PTHR11659">
    <property type="entry name" value="GLUTAMYL-TRNA GLN AMIDOTRANSFERASE SUBUNIT B MITOCHONDRIAL AND PROKARYOTIC PET112-RELATED"/>
    <property type="match status" value="1"/>
</dbReference>
<dbReference type="PANTHER" id="PTHR11659:SF0">
    <property type="entry name" value="GLUTAMYL-TRNA(GLN) AMIDOTRANSFERASE SUBUNIT B, MITOCHONDRIAL"/>
    <property type="match status" value="1"/>
</dbReference>
<dbReference type="Pfam" id="PF02934">
    <property type="entry name" value="GatB_N"/>
    <property type="match status" value="1"/>
</dbReference>
<dbReference type="Pfam" id="PF02637">
    <property type="entry name" value="GatB_Yqey"/>
    <property type="match status" value="1"/>
</dbReference>
<dbReference type="SMART" id="SM00845">
    <property type="entry name" value="GatB_Yqey"/>
    <property type="match status" value="1"/>
</dbReference>
<dbReference type="SUPFAM" id="SSF89095">
    <property type="entry name" value="GatB/YqeY motif"/>
    <property type="match status" value="1"/>
</dbReference>
<dbReference type="SUPFAM" id="SSF55931">
    <property type="entry name" value="Glutamine synthetase/guanido kinase"/>
    <property type="match status" value="1"/>
</dbReference>
<dbReference type="PROSITE" id="PS01234">
    <property type="entry name" value="GATB"/>
    <property type="match status" value="1"/>
</dbReference>
<evidence type="ECO:0000255" key="1">
    <source>
        <dbReference type="HAMAP-Rule" id="MF_00121"/>
    </source>
</evidence>
<reference key="1">
    <citation type="journal article" date="2009" name="J. Bacteriol.">
        <title>Complete and draft genome sequences of six members of the Aquificales.</title>
        <authorList>
            <person name="Reysenbach A.-L."/>
            <person name="Hamamura N."/>
            <person name="Podar M."/>
            <person name="Griffiths E."/>
            <person name="Ferreira S."/>
            <person name="Hochstein R."/>
            <person name="Heidelberg J."/>
            <person name="Johnson J."/>
            <person name="Mead D."/>
            <person name="Pohorille A."/>
            <person name="Sarmiento M."/>
            <person name="Schweighofer K."/>
            <person name="Seshadri R."/>
            <person name="Voytek M.A."/>
        </authorList>
    </citation>
    <scope>NUCLEOTIDE SEQUENCE [LARGE SCALE GENOMIC DNA]</scope>
    <source>
        <strain>DSM 14350 / EX-H1</strain>
    </source>
</reference>
<keyword id="KW-0067">ATP-binding</keyword>
<keyword id="KW-0436">Ligase</keyword>
<keyword id="KW-0547">Nucleotide-binding</keyword>
<keyword id="KW-0648">Protein biosynthesis</keyword>
<keyword id="KW-1185">Reference proteome</keyword>
<name>GATB_PERMH</name>
<feature type="chain" id="PRO_1000122530" description="Aspartyl/glutamyl-tRNA(Asn/Gln) amidotransferase subunit B">
    <location>
        <begin position="1"/>
        <end position="474"/>
    </location>
</feature>
<comment type="function">
    <text evidence="1">Allows the formation of correctly charged Asn-tRNA(Asn) or Gln-tRNA(Gln) through the transamidation of misacylated Asp-tRNA(Asn) or Glu-tRNA(Gln) in organisms which lack either or both of asparaginyl-tRNA or glutaminyl-tRNA synthetases. The reaction takes place in the presence of glutamine and ATP through an activated phospho-Asp-tRNA(Asn) or phospho-Glu-tRNA(Gln).</text>
</comment>
<comment type="catalytic activity">
    <reaction evidence="1">
        <text>L-glutamyl-tRNA(Gln) + L-glutamine + ATP + H2O = L-glutaminyl-tRNA(Gln) + L-glutamate + ADP + phosphate + H(+)</text>
        <dbReference type="Rhea" id="RHEA:17521"/>
        <dbReference type="Rhea" id="RHEA-COMP:9681"/>
        <dbReference type="Rhea" id="RHEA-COMP:9684"/>
        <dbReference type="ChEBI" id="CHEBI:15377"/>
        <dbReference type="ChEBI" id="CHEBI:15378"/>
        <dbReference type="ChEBI" id="CHEBI:29985"/>
        <dbReference type="ChEBI" id="CHEBI:30616"/>
        <dbReference type="ChEBI" id="CHEBI:43474"/>
        <dbReference type="ChEBI" id="CHEBI:58359"/>
        <dbReference type="ChEBI" id="CHEBI:78520"/>
        <dbReference type="ChEBI" id="CHEBI:78521"/>
        <dbReference type="ChEBI" id="CHEBI:456216"/>
    </reaction>
</comment>
<comment type="catalytic activity">
    <reaction evidence="1">
        <text>L-aspartyl-tRNA(Asn) + L-glutamine + ATP + H2O = L-asparaginyl-tRNA(Asn) + L-glutamate + ADP + phosphate + 2 H(+)</text>
        <dbReference type="Rhea" id="RHEA:14513"/>
        <dbReference type="Rhea" id="RHEA-COMP:9674"/>
        <dbReference type="Rhea" id="RHEA-COMP:9677"/>
        <dbReference type="ChEBI" id="CHEBI:15377"/>
        <dbReference type="ChEBI" id="CHEBI:15378"/>
        <dbReference type="ChEBI" id="CHEBI:29985"/>
        <dbReference type="ChEBI" id="CHEBI:30616"/>
        <dbReference type="ChEBI" id="CHEBI:43474"/>
        <dbReference type="ChEBI" id="CHEBI:58359"/>
        <dbReference type="ChEBI" id="CHEBI:78515"/>
        <dbReference type="ChEBI" id="CHEBI:78516"/>
        <dbReference type="ChEBI" id="CHEBI:456216"/>
    </reaction>
</comment>
<comment type="subunit">
    <text evidence="1">Heterotrimer of A, B and C subunits.</text>
</comment>
<comment type="similarity">
    <text evidence="1">Belongs to the GatB/GatE family. GatB subfamily.</text>
</comment>
<sequence length="474" mass="54113">MEFEPVIGLEVHVQMSTNTKCFCSCKIEFGAEPNTNVCPVCLGMPGSLPVLNKKALEYAIKASLALNCEVHELSVFARKNYFYPDLPKGYQISQYDKPLATNGYIDIKVNDKTERIRIHRLHMEEDAGKTIHKGSYSYVDLNRAGTPLMEIVSEPDIRSAVGARLYLEKLRNIMRYIGVSDADMEKGQLRCDVNISLRPKGEEKFGTKVEIKNINSFRFVQKAIEYEIERQARILRKGGEIVQETRLFDEKTGKTFTMRTKEEAHDYRYFPDPDLIPVRITKEYIEEIRKSLPELPDQKAERYVKELKLTEYDAEVLVADKDRALFFEKAVSVYSENPKSIANWIINELLGKLNEEGIEISNSPVRPEHIAELVQLIDKGDISSKIGKEVFEEVFKTGKSPKTIVEEKGLKQVSDEGEIRKIVEEVLNNHPAEVEKYKAGNQKLMGFFVGQVMKATRGKANPKLVNKILQELLK</sequence>
<accession>C0QUH9</accession>
<gene>
    <name evidence="1" type="primary">gatB</name>
    <name type="ordered locus">PERMA_0555</name>
</gene>
<organism>
    <name type="scientific">Persephonella marina (strain DSM 14350 / EX-H1)</name>
    <dbReference type="NCBI Taxonomy" id="123214"/>
    <lineage>
        <taxon>Bacteria</taxon>
        <taxon>Pseudomonadati</taxon>
        <taxon>Aquificota</taxon>
        <taxon>Aquificia</taxon>
        <taxon>Aquificales</taxon>
        <taxon>Hydrogenothermaceae</taxon>
        <taxon>Persephonella</taxon>
    </lineage>
</organism>
<proteinExistence type="inferred from homology"/>